<keyword id="KW-0131">Cell cycle</keyword>
<keyword id="KW-0132">Cell division</keyword>
<keyword id="KW-0133">Cell shape</keyword>
<keyword id="KW-0961">Cell wall biogenesis/degradation</keyword>
<keyword id="KW-0963">Cytoplasm</keyword>
<keyword id="KW-0326">Glycosidase</keyword>
<keyword id="KW-0378">Hydrolase</keyword>
<keyword id="KW-0573">Peptidoglycan synthesis</keyword>
<protein>
    <recommendedName>
        <fullName evidence="1">Beta-hexosaminidase</fullName>
        <ecNumber evidence="1">3.2.1.52</ecNumber>
    </recommendedName>
    <alternativeName>
        <fullName evidence="1">Beta-N-acetylhexosaminidase</fullName>
    </alternativeName>
    <alternativeName>
        <fullName evidence="1">N-acetyl-beta-glucosaminidase</fullName>
    </alternativeName>
</protein>
<feature type="chain" id="PRO_1000005659" description="Beta-hexosaminidase">
    <location>
        <begin position="1"/>
        <end position="332"/>
    </location>
</feature>
<feature type="active site" description="Proton donor/acceptor" evidence="1">
    <location>
        <position position="174"/>
    </location>
</feature>
<feature type="active site" description="Nucleophile" evidence="1">
    <location>
        <position position="244"/>
    </location>
</feature>
<feature type="binding site" evidence="1">
    <location>
        <position position="62"/>
    </location>
    <ligand>
        <name>substrate</name>
    </ligand>
</feature>
<feature type="binding site" evidence="1">
    <location>
        <position position="70"/>
    </location>
    <ligand>
        <name>substrate</name>
    </ligand>
</feature>
<feature type="binding site" evidence="1">
    <location>
        <position position="131"/>
    </location>
    <ligand>
        <name>substrate</name>
    </ligand>
</feature>
<feature type="binding site" evidence="1">
    <location>
        <begin position="161"/>
        <end position="162"/>
    </location>
    <ligand>
        <name>substrate</name>
    </ligand>
</feature>
<feature type="site" description="Important for catalytic activity" evidence="1">
    <location>
        <position position="172"/>
    </location>
</feature>
<sequence>MQGSLMLDIGGTWLTAEDRQILRHPEVGGLIIFARNIEHPAQVRELCAAIRAIRPDLLLAVDQEGGRVQRLRQGFVRLPAMRAIADNPNAEELAEHCGWLMATEVQAVGLDLSFAPVLDLDHQRSAVVGSRAFEGDPERAALLAGAFIRGMHAAGMAATGKHFPGHGWAEADSHVAIPEDARSLEEIRRSDLVPFARLAGQLDALMPAHVIYPQVDPQPAGFSRRWLQEILRGELKFDGVIFSDDLSMAGAHVVGDAASRIEAALAAGCDMGLVCNDRASAELALAALQRLKVTPPSRLQRMRGKGYANTDYRQQPRWLEALSALRAAQLID</sequence>
<evidence type="ECO:0000255" key="1">
    <source>
        <dbReference type="HAMAP-Rule" id="MF_00364"/>
    </source>
</evidence>
<dbReference type="EC" id="3.2.1.52" evidence="1"/>
<dbReference type="EMBL" id="CP000438">
    <property type="protein sequence ID" value="ABJ15648.1"/>
    <property type="molecule type" value="Genomic_DNA"/>
</dbReference>
<dbReference type="RefSeq" id="WP_003118092.1">
    <property type="nucleotide sequence ID" value="NZ_CP034244.1"/>
</dbReference>
<dbReference type="SMR" id="Q02PG9"/>
<dbReference type="CAZy" id="GH3">
    <property type="family name" value="Glycoside Hydrolase Family 3"/>
</dbReference>
<dbReference type="KEGG" id="pau:PA14_25195"/>
<dbReference type="PseudoCAP" id="PA14_25195"/>
<dbReference type="HOGENOM" id="CLU_008392_0_0_6"/>
<dbReference type="BioCyc" id="PAER208963:G1G74-2102-MONOMER"/>
<dbReference type="UniPathway" id="UPA00544"/>
<dbReference type="Proteomes" id="UP000000653">
    <property type="component" value="Chromosome"/>
</dbReference>
<dbReference type="GO" id="GO:0005737">
    <property type="term" value="C:cytoplasm"/>
    <property type="evidence" value="ECO:0007669"/>
    <property type="project" value="UniProtKB-SubCell"/>
</dbReference>
<dbReference type="GO" id="GO:0004563">
    <property type="term" value="F:beta-N-acetylhexosaminidase activity"/>
    <property type="evidence" value="ECO:0007669"/>
    <property type="project" value="UniProtKB-UniRule"/>
</dbReference>
<dbReference type="GO" id="GO:0005975">
    <property type="term" value="P:carbohydrate metabolic process"/>
    <property type="evidence" value="ECO:0007669"/>
    <property type="project" value="InterPro"/>
</dbReference>
<dbReference type="GO" id="GO:0051301">
    <property type="term" value="P:cell division"/>
    <property type="evidence" value="ECO:0007669"/>
    <property type="project" value="UniProtKB-KW"/>
</dbReference>
<dbReference type="GO" id="GO:0071555">
    <property type="term" value="P:cell wall organization"/>
    <property type="evidence" value="ECO:0007669"/>
    <property type="project" value="UniProtKB-KW"/>
</dbReference>
<dbReference type="GO" id="GO:0009252">
    <property type="term" value="P:peptidoglycan biosynthetic process"/>
    <property type="evidence" value="ECO:0007669"/>
    <property type="project" value="UniProtKB-KW"/>
</dbReference>
<dbReference type="GO" id="GO:0009254">
    <property type="term" value="P:peptidoglycan turnover"/>
    <property type="evidence" value="ECO:0007669"/>
    <property type="project" value="UniProtKB-UniRule"/>
</dbReference>
<dbReference type="GO" id="GO:0008360">
    <property type="term" value="P:regulation of cell shape"/>
    <property type="evidence" value="ECO:0007669"/>
    <property type="project" value="UniProtKB-KW"/>
</dbReference>
<dbReference type="FunFam" id="3.20.20.300:FF:000001">
    <property type="entry name" value="Beta-hexosaminidase"/>
    <property type="match status" value="1"/>
</dbReference>
<dbReference type="Gene3D" id="3.20.20.300">
    <property type="entry name" value="Glycoside hydrolase, family 3, N-terminal domain"/>
    <property type="match status" value="1"/>
</dbReference>
<dbReference type="HAMAP" id="MF_00364">
    <property type="entry name" value="NagZ"/>
    <property type="match status" value="1"/>
</dbReference>
<dbReference type="InterPro" id="IPR022956">
    <property type="entry name" value="Beta_hexosaminidase_bac"/>
</dbReference>
<dbReference type="InterPro" id="IPR019800">
    <property type="entry name" value="Glyco_hydro_3_AS"/>
</dbReference>
<dbReference type="InterPro" id="IPR001764">
    <property type="entry name" value="Glyco_hydro_3_N"/>
</dbReference>
<dbReference type="InterPro" id="IPR036962">
    <property type="entry name" value="Glyco_hydro_3_N_sf"/>
</dbReference>
<dbReference type="InterPro" id="IPR017853">
    <property type="entry name" value="Glycoside_hydrolase_SF"/>
</dbReference>
<dbReference type="InterPro" id="IPR050226">
    <property type="entry name" value="NagZ_Beta-hexosaminidase"/>
</dbReference>
<dbReference type="NCBIfam" id="NF003740">
    <property type="entry name" value="PRK05337.1"/>
    <property type="match status" value="1"/>
</dbReference>
<dbReference type="PANTHER" id="PTHR30480:SF13">
    <property type="entry name" value="BETA-HEXOSAMINIDASE"/>
    <property type="match status" value="1"/>
</dbReference>
<dbReference type="PANTHER" id="PTHR30480">
    <property type="entry name" value="BETA-HEXOSAMINIDASE-RELATED"/>
    <property type="match status" value="1"/>
</dbReference>
<dbReference type="Pfam" id="PF00933">
    <property type="entry name" value="Glyco_hydro_3"/>
    <property type="match status" value="1"/>
</dbReference>
<dbReference type="SUPFAM" id="SSF51445">
    <property type="entry name" value="(Trans)glycosidases"/>
    <property type="match status" value="1"/>
</dbReference>
<dbReference type="PROSITE" id="PS00775">
    <property type="entry name" value="GLYCOSYL_HYDROL_F3"/>
    <property type="match status" value="1"/>
</dbReference>
<comment type="function">
    <text evidence="1">Plays a role in peptidoglycan recycling by cleaving the terminal beta-1,4-linked N-acetylglucosamine (GlcNAc) from peptide-linked peptidoglycan fragments, giving rise to free GlcNAc, anhydro-N-acetylmuramic acid and anhydro-N-acetylmuramic acid-linked peptides.</text>
</comment>
<comment type="catalytic activity">
    <reaction evidence="1">
        <text>Hydrolysis of terminal non-reducing N-acetyl-D-hexosamine residues in N-acetyl-beta-D-hexosaminides.</text>
        <dbReference type="EC" id="3.2.1.52"/>
    </reaction>
</comment>
<comment type="pathway">
    <text evidence="1">Cell wall biogenesis; peptidoglycan recycling.</text>
</comment>
<comment type="subcellular location">
    <subcellularLocation>
        <location evidence="1">Cytoplasm</location>
    </subcellularLocation>
</comment>
<comment type="similarity">
    <text evidence="1">Belongs to the glycosyl hydrolase 3 family. NagZ subfamily.</text>
</comment>
<accession>Q02PG9</accession>
<proteinExistence type="inferred from homology"/>
<name>NAGZ_PSEAB</name>
<gene>
    <name evidence="1" type="primary">nagZ</name>
    <name type="ordered locus">PA14_25195</name>
</gene>
<reference key="1">
    <citation type="journal article" date="2006" name="Genome Biol.">
        <title>Genomic analysis reveals that Pseudomonas aeruginosa virulence is combinatorial.</title>
        <authorList>
            <person name="Lee D.G."/>
            <person name="Urbach J.M."/>
            <person name="Wu G."/>
            <person name="Liberati N.T."/>
            <person name="Feinbaum R.L."/>
            <person name="Miyata S."/>
            <person name="Diggins L.T."/>
            <person name="He J."/>
            <person name="Saucier M."/>
            <person name="Deziel E."/>
            <person name="Friedman L."/>
            <person name="Li L."/>
            <person name="Grills G."/>
            <person name="Montgomery K."/>
            <person name="Kucherlapati R."/>
            <person name="Rahme L.G."/>
            <person name="Ausubel F.M."/>
        </authorList>
    </citation>
    <scope>NUCLEOTIDE SEQUENCE [LARGE SCALE GENOMIC DNA]</scope>
    <source>
        <strain>UCBPP-PA14</strain>
    </source>
</reference>
<organism>
    <name type="scientific">Pseudomonas aeruginosa (strain UCBPP-PA14)</name>
    <dbReference type="NCBI Taxonomy" id="208963"/>
    <lineage>
        <taxon>Bacteria</taxon>
        <taxon>Pseudomonadati</taxon>
        <taxon>Pseudomonadota</taxon>
        <taxon>Gammaproteobacteria</taxon>
        <taxon>Pseudomonadales</taxon>
        <taxon>Pseudomonadaceae</taxon>
        <taxon>Pseudomonas</taxon>
    </lineage>
</organism>